<gene>
    <name evidence="1" type="primary">rps15</name>
    <name type="ordered locus">Mbur_2345</name>
</gene>
<keyword id="KW-0687">Ribonucleoprotein</keyword>
<keyword id="KW-0689">Ribosomal protein</keyword>
<evidence type="ECO:0000255" key="1">
    <source>
        <dbReference type="HAMAP-Rule" id="MF_01343"/>
    </source>
</evidence>
<evidence type="ECO:0000256" key="2">
    <source>
        <dbReference type="SAM" id="MobiDB-lite"/>
    </source>
</evidence>
<evidence type="ECO:0000305" key="3"/>
<accession>Q12TM7</accession>
<comment type="subunit">
    <text evidence="1">Part of the 30S ribosomal subunit.</text>
</comment>
<comment type="similarity">
    <text evidence="1">Belongs to the universal ribosomal protein uS15 family.</text>
</comment>
<proteinExistence type="inferred from homology"/>
<feature type="chain" id="PRO_0000255551" description="Small ribosomal subunit protein uS15">
    <location>
        <begin position="1"/>
        <end position="152"/>
    </location>
</feature>
<feature type="region of interest" description="Disordered" evidence="2">
    <location>
        <begin position="1"/>
        <end position="26"/>
    </location>
</feature>
<feature type="compositionally biased region" description="Basic residues" evidence="2">
    <location>
        <begin position="1"/>
        <end position="10"/>
    </location>
</feature>
<feature type="compositionally biased region" description="Polar residues" evidence="2">
    <location>
        <begin position="11"/>
        <end position="26"/>
    </location>
</feature>
<dbReference type="EMBL" id="CP000300">
    <property type="protein sequence ID" value="ABE53199.1"/>
    <property type="molecule type" value="Genomic_DNA"/>
</dbReference>
<dbReference type="RefSeq" id="WP_011500334.1">
    <property type="nucleotide sequence ID" value="NC_007955.1"/>
</dbReference>
<dbReference type="SMR" id="Q12TM7"/>
<dbReference type="STRING" id="259564.Mbur_2345"/>
<dbReference type="GeneID" id="3998926"/>
<dbReference type="KEGG" id="mbu:Mbur_2345"/>
<dbReference type="HOGENOM" id="CLU_090139_2_0_2"/>
<dbReference type="OrthoDB" id="6533at2157"/>
<dbReference type="Proteomes" id="UP000001979">
    <property type="component" value="Chromosome"/>
</dbReference>
<dbReference type="GO" id="GO:0022627">
    <property type="term" value="C:cytosolic small ribosomal subunit"/>
    <property type="evidence" value="ECO:0007669"/>
    <property type="project" value="TreeGrafter"/>
</dbReference>
<dbReference type="GO" id="GO:0070181">
    <property type="term" value="F:small ribosomal subunit rRNA binding"/>
    <property type="evidence" value="ECO:0007669"/>
    <property type="project" value="TreeGrafter"/>
</dbReference>
<dbReference type="GO" id="GO:0003735">
    <property type="term" value="F:structural constituent of ribosome"/>
    <property type="evidence" value="ECO:0007669"/>
    <property type="project" value="InterPro"/>
</dbReference>
<dbReference type="GO" id="GO:0006412">
    <property type="term" value="P:translation"/>
    <property type="evidence" value="ECO:0007669"/>
    <property type="project" value="UniProtKB-UniRule"/>
</dbReference>
<dbReference type="CDD" id="cd00353">
    <property type="entry name" value="Ribosomal_S15p_S13e"/>
    <property type="match status" value="1"/>
</dbReference>
<dbReference type="FunFam" id="1.10.287.10:FF:000003">
    <property type="entry name" value="40S ribosomal protein S13"/>
    <property type="match status" value="1"/>
</dbReference>
<dbReference type="Gene3D" id="4.10.860.130">
    <property type="match status" value="1"/>
</dbReference>
<dbReference type="Gene3D" id="1.10.287.10">
    <property type="entry name" value="S15/NS1, RNA-binding"/>
    <property type="match status" value="1"/>
</dbReference>
<dbReference type="HAMAP" id="MF_01343_A">
    <property type="entry name" value="Ribosomal_uS15_A"/>
    <property type="match status" value="1"/>
</dbReference>
<dbReference type="InterPro" id="IPR000589">
    <property type="entry name" value="Ribosomal_uS15"/>
</dbReference>
<dbReference type="InterPro" id="IPR023029">
    <property type="entry name" value="Ribosomal_uS15_arc_euk"/>
</dbReference>
<dbReference type="InterPro" id="IPR012606">
    <property type="entry name" value="Ribosomal_uS15_N"/>
</dbReference>
<dbReference type="InterPro" id="IPR009068">
    <property type="entry name" value="uS15_NS1_RNA-bd_sf"/>
</dbReference>
<dbReference type="NCBIfam" id="NF006331">
    <property type="entry name" value="PRK08561.1"/>
    <property type="match status" value="1"/>
</dbReference>
<dbReference type="PANTHER" id="PTHR11885">
    <property type="entry name" value="RIBOSOMAL PROTEIN S15P/S13E"/>
    <property type="match status" value="1"/>
</dbReference>
<dbReference type="PANTHER" id="PTHR11885:SF6">
    <property type="entry name" value="SMALL RIBOSOMAL SUBUNIT PROTEIN US15"/>
    <property type="match status" value="1"/>
</dbReference>
<dbReference type="Pfam" id="PF08069">
    <property type="entry name" value="Ribosomal_S13_N"/>
    <property type="match status" value="1"/>
</dbReference>
<dbReference type="Pfam" id="PF00312">
    <property type="entry name" value="Ribosomal_S15"/>
    <property type="match status" value="1"/>
</dbReference>
<dbReference type="SMART" id="SM01386">
    <property type="entry name" value="Ribosomal_S13_N"/>
    <property type="match status" value="1"/>
</dbReference>
<dbReference type="SMART" id="SM01387">
    <property type="entry name" value="Ribosomal_S15"/>
    <property type="match status" value="1"/>
</dbReference>
<dbReference type="SUPFAM" id="SSF47060">
    <property type="entry name" value="S15/NS1 RNA-binding domain"/>
    <property type="match status" value="1"/>
</dbReference>
<reference key="1">
    <citation type="journal article" date="2009" name="ISME J.">
        <title>The genome sequence of the psychrophilic archaeon, Methanococcoides burtonii: the role of genome evolution in cold adaptation.</title>
        <authorList>
            <person name="Allen M.A."/>
            <person name="Lauro F.M."/>
            <person name="Williams T.J."/>
            <person name="Burg D."/>
            <person name="Siddiqui K.S."/>
            <person name="De Francisci D."/>
            <person name="Chong K.W."/>
            <person name="Pilak O."/>
            <person name="Chew H.H."/>
            <person name="De Maere M.Z."/>
            <person name="Ting L."/>
            <person name="Katrib M."/>
            <person name="Ng C."/>
            <person name="Sowers K.R."/>
            <person name="Galperin M.Y."/>
            <person name="Anderson I.J."/>
            <person name="Ivanova N."/>
            <person name="Dalin E."/>
            <person name="Martinez M."/>
            <person name="Lapidus A."/>
            <person name="Hauser L."/>
            <person name="Land M."/>
            <person name="Thomas T."/>
            <person name="Cavicchioli R."/>
        </authorList>
    </citation>
    <scope>NUCLEOTIDE SEQUENCE [LARGE SCALE GENOMIC DNA]</scope>
    <source>
        <strain>DSM 6242 / NBRC 107633 / OCM 468 / ACE-M</strain>
    </source>
</reference>
<sequence length="152" mass="17249">MAKMHTRTKGKSGSTKPIRSESPAWSTATTEEITKVVLDLWKQGNSTSVIGMVLRDNYGVPDVKLATGKKVTEILRDNSEEPNVPEDLYNLIVKAIGLRKHLVVNNKDVHNKRSLQSAESKIRRLVKYYQSTKVLPIDWKYKPETAEMLITR</sequence>
<organism>
    <name type="scientific">Methanococcoides burtonii (strain DSM 6242 / NBRC 107633 / OCM 468 / ACE-M)</name>
    <dbReference type="NCBI Taxonomy" id="259564"/>
    <lineage>
        <taxon>Archaea</taxon>
        <taxon>Methanobacteriati</taxon>
        <taxon>Methanobacteriota</taxon>
        <taxon>Stenosarchaea group</taxon>
        <taxon>Methanomicrobia</taxon>
        <taxon>Methanosarcinales</taxon>
        <taxon>Methanosarcinaceae</taxon>
        <taxon>Methanococcoides</taxon>
    </lineage>
</organism>
<name>RS15_METBU</name>
<protein>
    <recommendedName>
        <fullName evidence="1">Small ribosomal subunit protein uS15</fullName>
    </recommendedName>
    <alternativeName>
        <fullName evidence="3">30S ribosomal protein S15</fullName>
    </alternativeName>
</protein>